<evidence type="ECO:0000255" key="1">
    <source>
        <dbReference type="HAMAP-Rule" id="MF_01873"/>
    </source>
</evidence>
<evidence type="ECO:0000255" key="2">
    <source>
        <dbReference type="PROSITE-ProRule" id="PRU01266"/>
    </source>
</evidence>
<organism>
    <name type="scientific">Bacillus velezensis (strain DSM 23117 / BGSC 10A6 / LMG 26770 / FZB42)</name>
    <name type="common">Bacillus amyloliquefaciens subsp. plantarum</name>
    <dbReference type="NCBI Taxonomy" id="326423"/>
    <lineage>
        <taxon>Bacteria</taxon>
        <taxon>Bacillati</taxon>
        <taxon>Bacillota</taxon>
        <taxon>Bacilli</taxon>
        <taxon>Bacillales</taxon>
        <taxon>Bacillaceae</taxon>
        <taxon>Bacillus</taxon>
        <taxon>Bacillus amyloliquefaciens group</taxon>
    </lineage>
</organism>
<keyword id="KW-0004">4Fe-4S</keyword>
<keyword id="KW-0046">Antibiotic resistance</keyword>
<keyword id="KW-0963">Cytoplasm</keyword>
<keyword id="KW-1015">Disulfide bond</keyword>
<keyword id="KW-0408">Iron</keyword>
<keyword id="KW-0411">Iron-sulfur</keyword>
<keyword id="KW-0479">Metal-binding</keyword>
<keyword id="KW-0489">Methyltransferase</keyword>
<keyword id="KW-0698">rRNA processing</keyword>
<keyword id="KW-0949">S-adenosyl-L-methionine</keyword>
<keyword id="KW-0808">Transferase</keyword>
<gene>
    <name evidence="1" type="primary">cfr</name>
    <name type="ordered locus">RBAM_005660</name>
</gene>
<protein>
    <recommendedName>
        <fullName evidence="1">Ribosomal RNA large subunit methyltransferase Cfr</fullName>
        <ecNumber evidence="1">2.1.1.224</ecNumber>
    </recommendedName>
    <alternativeName>
        <fullName evidence="1">23S rRNA (adenine(2503)-C(8))-methyltransferase</fullName>
    </alternativeName>
    <alternativeName>
        <fullName evidence="1">23S rRNA m8A2503 methyltransferase</fullName>
    </alternativeName>
</protein>
<comment type="function">
    <text evidence="1">Specifically methylates position 8 of adenine 2503 in 23S rRNA. Confers resistance to some classes of antibiotics.</text>
</comment>
<comment type="catalytic activity">
    <reaction evidence="1">
        <text>adenosine(2503) in 23S rRNA + 2 reduced [2Fe-2S]-[ferredoxin] + 2 S-adenosyl-L-methionine = 8-methyladenosine(2503) in 23S rRNA + 5'-deoxyadenosine + L-methionine + 2 oxidized [2Fe-2S]-[ferredoxin] + S-adenosyl-L-homocysteine</text>
        <dbReference type="Rhea" id="RHEA:42632"/>
        <dbReference type="Rhea" id="RHEA-COMP:10000"/>
        <dbReference type="Rhea" id="RHEA-COMP:10001"/>
        <dbReference type="Rhea" id="RHEA-COMP:10152"/>
        <dbReference type="Rhea" id="RHEA-COMP:10153"/>
        <dbReference type="ChEBI" id="CHEBI:17319"/>
        <dbReference type="ChEBI" id="CHEBI:33737"/>
        <dbReference type="ChEBI" id="CHEBI:33738"/>
        <dbReference type="ChEBI" id="CHEBI:57844"/>
        <dbReference type="ChEBI" id="CHEBI:57856"/>
        <dbReference type="ChEBI" id="CHEBI:59789"/>
        <dbReference type="ChEBI" id="CHEBI:74411"/>
        <dbReference type="ChEBI" id="CHEBI:74543"/>
        <dbReference type="EC" id="2.1.1.224"/>
    </reaction>
</comment>
<comment type="cofactor">
    <cofactor evidence="1">
        <name>[4Fe-4S] cluster</name>
        <dbReference type="ChEBI" id="CHEBI:49883"/>
    </cofactor>
    <text evidence="1">Binds 1 [4Fe-4S] cluster. The cluster is coordinated with 3 cysteines and an exchangeable S-adenosyl-L-methionine.</text>
</comment>
<comment type="subcellular location">
    <subcellularLocation>
        <location evidence="1">Cytoplasm</location>
    </subcellularLocation>
</comment>
<comment type="miscellaneous">
    <text evidence="1">Reaction proceeds by a ping-pong mechanism involving intermediate methylation of a conserved cysteine residue.</text>
</comment>
<comment type="similarity">
    <text evidence="1">Belongs to the radical SAM superfamily. RlmN family. Cfr subfamily.</text>
</comment>
<name>CFR_BACVZ</name>
<proteinExistence type="inferred from homology"/>
<reference key="1">
    <citation type="journal article" date="2007" name="Nat. Biotechnol.">
        <title>Comparative analysis of the complete genome sequence of the plant growth-promoting bacterium Bacillus amyloliquefaciens FZB42.</title>
        <authorList>
            <person name="Chen X.H."/>
            <person name="Koumoutsi A."/>
            <person name="Scholz R."/>
            <person name="Eisenreich A."/>
            <person name="Schneider K."/>
            <person name="Heinemeyer I."/>
            <person name="Morgenstern B."/>
            <person name="Voss B."/>
            <person name="Hess W.R."/>
            <person name="Reva O."/>
            <person name="Junge H."/>
            <person name="Voigt B."/>
            <person name="Jungblut P.R."/>
            <person name="Vater J."/>
            <person name="Suessmuth R."/>
            <person name="Liesegang H."/>
            <person name="Strittmatter A."/>
            <person name="Gottschalk G."/>
            <person name="Borriss R."/>
        </authorList>
    </citation>
    <scope>NUCLEOTIDE SEQUENCE [LARGE SCALE GENOMIC DNA]</scope>
    <source>
        <strain>DSM 23117 / BGSC 10A6 / LMG 26770 / FZB42</strain>
    </source>
</reference>
<feature type="chain" id="PRO_0000350025" description="Ribosomal RNA large subunit methyltransferase Cfr">
    <location>
        <begin position="1"/>
        <end position="349"/>
    </location>
</feature>
<feature type="domain" description="Radical SAM core" evidence="2">
    <location>
        <begin position="96"/>
        <end position="331"/>
    </location>
</feature>
<feature type="active site" description="Proton acceptor" evidence="1">
    <location>
        <position position="89"/>
    </location>
</feature>
<feature type="active site" description="S-methylcysteine intermediate" evidence="1">
    <location>
        <position position="336"/>
    </location>
</feature>
<feature type="binding site" evidence="1">
    <location>
        <position position="110"/>
    </location>
    <ligand>
        <name>[4Fe-4S] cluster</name>
        <dbReference type="ChEBI" id="CHEBI:49883"/>
        <note>4Fe-4S-S-AdoMet</note>
    </ligand>
</feature>
<feature type="binding site" evidence="1">
    <location>
        <position position="114"/>
    </location>
    <ligand>
        <name>[4Fe-4S] cluster</name>
        <dbReference type="ChEBI" id="CHEBI:49883"/>
        <note>4Fe-4S-S-AdoMet</note>
    </ligand>
</feature>
<feature type="binding site" evidence="1">
    <location>
        <position position="117"/>
    </location>
    <ligand>
        <name>[4Fe-4S] cluster</name>
        <dbReference type="ChEBI" id="CHEBI:49883"/>
        <note>4Fe-4S-S-AdoMet</note>
    </ligand>
</feature>
<feature type="binding site" evidence="1">
    <location>
        <begin position="156"/>
        <end position="157"/>
    </location>
    <ligand>
        <name>S-adenosyl-L-methionine</name>
        <dbReference type="ChEBI" id="CHEBI:59789"/>
    </ligand>
</feature>
<feature type="binding site" evidence="1">
    <location>
        <position position="187"/>
    </location>
    <ligand>
        <name>S-adenosyl-L-methionine</name>
        <dbReference type="ChEBI" id="CHEBI:59789"/>
    </ligand>
</feature>
<feature type="binding site" evidence="1">
    <location>
        <begin position="210"/>
        <end position="212"/>
    </location>
    <ligand>
        <name>S-adenosyl-L-methionine</name>
        <dbReference type="ChEBI" id="CHEBI:59789"/>
    </ligand>
</feature>
<feature type="binding site" evidence="1">
    <location>
        <position position="291"/>
    </location>
    <ligand>
        <name>S-adenosyl-L-methionine</name>
        <dbReference type="ChEBI" id="CHEBI:59789"/>
    </ligand>
</feature>
<feature type="disulfide bond" description="(transient)" evidence="1">
    <location>
        <begin position="103"/>
        <end position="336"/>
    </location>
</feature>
<sequence>MQQKNKYIRIQEFLKQNKFPDFRMNQIKNAVFQGRINHFNEITVLPKSLRKLLIEEFGESILNIAPLKVQHSEQVTKVLFEISGDEKIETVNMKYKAGWESFCISSQCGCHFGCKFCATGDIGLKRNLTSDEMTDQILYFHLKGHSIDSISFMGMGEALANVQVFDALHVLTNPELFALSPRRLSISTIGIIPGIKKITQDYPQVNLTFSLHSPFNEQRSKLMPINERYPLLEVMDTLDEHIRVTSRKVYIAYIMLPGVNDSIDHANEVVNLLRSRYKRGNLFHVNIIRYNPTVSSPMRFEEVNEKQVVNFYKKLKSAGINVTVRSQFGIDIDAACGQLYGNYQKNKNQ</sequence>
<dbReference type="EC" id="2.1.1.224" evidence="1"/>
<dbReference type="EMBL" id="CP000560">
    <property type="protein sequence ID" value="ABS72958.1"/>
    <property type="molecule type" value="Genomic_DNA"/>
</dbReference>
<dbReference type="RefSeq" id="WP_012116915.1">
    <property type="nucleotide sequence ID" value="NC_009725.2"/>
</dbReference>
<dbReference type="SMR" id="A7Z1T2"/>
<dbReference type="CARD" id="ARO:3002814">
    <property type="molecule name" value="clbA"/>
    <property type="mechanism identifier" value="ARO:0001001"/>
    <property type="mechanism name" value="antibiotic target alteration"/>
</dbReference>
<dbReference type="GeneID" id="93079701"/>
<dbReference type="KEGG" id="bay:RBAM_005660"/>
<dbReference type="HOGENOM" id="CLU_029101_0_2_9"/>
<dbReference type="Proteomes" id="UP000001120">
    <property type="component" value="Chromosome"/>
</dbReference>
<dbReference type="GO" id="GO:0005737">
    <property type="term" value="C:cytoplasm"/>
    <property type="evidence" value="ECO:0007669"/>
    <property type="project" value="UniProtKB-SubCell"/>
</dbReference>
<dbReference type="GO" id="GO:0051539">
    <property type="term" value="F:4 iron, 4 sulfur cluster binding"/>
    <property type="evidence" value="ECO:0007669"/>
    <property type="project" value="UniProtKB-UniRule"/>
</dbReference>
<dbReference type="GO" id="GO:0046872">
    <property type="term" value="F:metal ion binding"/>
    <property type="evidence" value="ECO:0007669"/>
    <property type="project" value="UniProtKB-KW"/>
</dbReference>
<dbReference type="GO" id="GO:0016433">
    <property type="term" value="F:rRNA (adenine) methyltransferase activity"/>
    <property type="evidence" value="ECO:0007669"/>
    <property type="project" value="UniProtKB-UniRule"/>
</dbReference>
<dbReference type="GO" id="GO:0019843">
    <property type="term" value="F:rRNA binding"/>
    <property type="evidence" value="ECO:0007669"/>
    <property type="project" value="UniProtKB-UniRule"/>
</dbReference>
<dbReference type="GO" id="GO:0046677">
    <property type="term" value="P:response to antibiotic"/>
    <property type="evidence" value="ECO:0007669"/>
    <property type="project" value="UniProtKB-KW"/>
</dbReference>
<dbReference type="GO" id="GO:0070475">
    <property type="term" value="P:rRNA base methylation"/>
    <property type="evidence" value="ECO:0007669"/>
    <property type="project" value="UniProtKB-UniRule"/>
</dbReference>
<dbReference type="GO" id="GO:0030488">
    <property type="term" value="P:tRNA methylation"/>
    <property type="evidence" value="ECO:0007669"/>
    <property type="project" value="TreeGrafter"/>
</dbReference>
<dbReference type="CDD" id="cd01335">
    <property type="entry name" value="Radical_SAM"/>
    <property type="match status" value="1"/>
</dbReference>
<dbReference type="Gene3D" id="1.10.150.530">
    <property type="match status" value="1"/>
</dbReference>
<dbReference type="Gene3D" id="3.20.20.70">
    <property type="entry name" value="Aldolase class I"/>
    <property type="match status" value="1"/>
</dbReference>
<dbReference type="HAMAP" id="MF_01873">
    <property type="entry name" value="23SrRNA_methyltr_Cfr"/>
    <property type="match status" value="1"/>
</dbReference>
<dbReference type="InterPro" id="IPR013785">
    <property type="entry name" value="Aldolase_TIM"/>
</dbReference>
<dbReference type="InterPro" id="IPR040072">
    <property type="entry name" value="Methyltransferase_A"/>
</dbReference>
<dbReference type="InterPro" id="IPR022881">
    <property type="entry name" value="rRNA_lsu_MeTfrase_Cfr"/>
</dbReference>
<dbReference type="InterPro" id="IPR004383">
    <property type="entry name" value="rRNA_lsu_MTrfase_RlmN/Cfr"/>
</dbReference>
<dbReference type="InterPro" id="IPR007197">
    <property type="entry name" value="rSAM"/>
</dbReference>
<dbReference type="NCBIfam" id="NF000424">
    <property type="entry name" value="CfrAB"/>
    <property type="match status" value="1"/>
</dbReference>
<dbReference type="NCBIfam" id="NF011024">
    <property type="entry name" value="PRK14453.1"/>
    <property type="match status" value="1"/>
</dbReference>
<dbReference type="NCBIfam" id="TIGR04432">
    <property type="entry name" value="rSAM_Cfr"/>
    <property type="match status" value="1"/>
</dbReference>
<dbReference type="PANTHER" id="PTHR30544">
    <property type="entry name" value="23S RRNA METHYLTRANSFERASE"/>
    <property type="match status" value="1"/>
</dbReference>
<dbReference type="PANTHER" id="PTHR30544:SF5">
    <property type="entry name" value="RADICAL SAM CORE DOMAIN-CONTAINING PROTEIN"/>
    <property type="match status" value="1"/>
</dbReference>
<dbReference type="Pfam" id="PF04055">
    <property type="entry name" value="Radical_SAM"/>
    <property type="match status" value="1"/>
</dbReference>
<dbReference type="PIRSF" id="PIRSF006004">
    <property type="entry name" value="CHP00048"/>
    <property type="match status" value="1"/>
</dbReference>
<dbReference type="SFLD" id="SFLDF00275">
    <property type="entry name" value="adenosine_C2_methyltransferase"/>
    <property type="match status" value="1"/>
</dbReference>
<dbReference type="SFLD" id="SFLDF00296">
    <property type="entry name" value="adenosine_C8_methyltransferase"/>
    <property type="match status" value="1"/>
</dbReference>
<dbReference type="SFLD" id="SFLDG01062">
    <property type="entry name" value="methyltransferase_(Class_A)"/>
    <property type="match status" value="1"/>
</dbReference>
<dbReference type="SFLD" id="SFLDS00029">
    <property type="entry name" value="Radical_SAM"/>
    <property type="match status" value="1"/>
</dbReference>
<dbReference type="SUPFAM" id="SSF102114">
    <property type="entry name" value="Radical SAM enzymes"/>
    <property type="match status" value="1"/>
</dbReference>
<dbReference type="PROSITE" id="PS51918">
    <property type="entry name" value="RADICAL_SAM"/>
    <property type="match status" value="1"/>
</dbReference>
<accession>A7Z1T2</accession>